<reference key="1">
    <citation type="journal article" date="2004" name="Nucleic Acids Res.">
        <title>The genome sequence of Bacillus cereus ATCC 10987 reveals metabolic adaptations and a large plasmid related to Bacillus anthracis pXO1.</title>
        <authorList>
            <person name="Rasko D.A."/>
            <person name="Ravel J."/>
            <person name="Oekstad O.A."/>
            <person name="Helgason E."/>
            <person name="Cer R.Z."/>
            <person name="Jiang L."/>
            <person name="Shores K.A."/>
            <person name="Fouts D.E."/>
            <person name="Tourasse N.J."/>
            <person name="Angiuoli S.V."/>
            <person name="Kolonay J.F."/>
            <person name="Nelson W.C."/>
            <person name="Kolstoe A.-B."/>
            <person name="Fraser C.M."/>
            <person name="Read T.D."/>
        </authorList>
    </citation>
    <scope>NUCLEOTIDE SEQUENCE [LARGE SCALE GENOMIC DNA]</scope>
    <source>
        <strain>ATCC 10987 / NRS 248</strain>
    </source>
</reference>
<protein>
    <recommendedName>
        <fullName evidence="1">Antiholin-like protein LrgB</fullName>
    </recommendedName>
</protein>
<evidence type="ECO:0000255" key="1">
    <source>
        <dbReference type="HAMAP-Rule" id="MF_01142"/>
    </source>
</evidence>
<proteinExistence type="inferred from homology"/>
<comment type="function">
    <text evidence="1">Inhibits the expression or activity of extracellular murein hydrolases by interacting, possibly with LrgA, with the holin-like protein CidA. The LrgAB and CidA proteins may affect the proton motive force of the membrane. May be involved in programmed cell death (PCD), possibly triggering PCD in response to antibiotics and environmental stresses.</text>
</comment>
<comment type="subcellular location">
    <subcellularLocation>
        <location evidence="1">Cell membrane</location>
        <topology evidence="1">Multi-pass membrane protein</topology>
    </subcellularLocation>
</comment>
<comment type="similarity">
    <text evidence="1">Belongs to the CidB/LrgB family. LrgB subfamily.</text>
</comment>
<keyword id="KW-1003">Cell membrane</keyword>
<keyword id="KW-0204">Cytolysis</keyword>
<keyword id="KW-0472">Membrane</keyword>
<keyword id="KW-0812">Transmembrane</keyword>
<keyword id="KW-1133">Transmembrane helix</keyword>
<organism>
    <name type="scientific">Bacillus cereus (strain ATCC 10987 / NRS 248)</name>
    <dbReference type="NCBI Taxonomy" id="222523"/>
    <lineage>
        <taxon>Bacteria</taxon>
        <taxon>Bacillati</taxon>
        <taxon>Bacillota</taxon>
        <taxon>Bacilli</taxon>
        <taxon>Bacillales</taxon>
        <taxon>Bacillaceae</taxon>
        <taxon>Bacillus</taxon>
        <taxon>Bacillus cereus group</taxon>
    </lineage>
</organism>
<sequence length="230" mass="24349">MASTMTPYFGIVVSLIAYGIGTLLFKHSKGFFLFTPLFVAMVLGIVFLKVGNFTFEEYNTGGKMISFFLEPATIAFAIPLYKQVDKLKKYWWQILSAIVVGSICSVIVVFIVAKAIGLDTAVMNSMLPQAATTAIALPISESIGGIPAITSFAVIFNAVIVYALGALFLKTFRVKHPIAKGLALGTAGHALGVAVGIEMGEVEAAMASIAVTVVGVVTVVVIPMFMPFIG</sequence>
<gene>
    <name evidence="1" type="primary">lrgB</name>
    <name type="ordered locus">BCE_5571</name>
</gene>
<accession>Q72X07</accession>
<feature type="chain" id="PRO_1000065439" description="Antiholin-like protein LrgB">
    <location>
        <begin position="1"/>
        <end position="230"/>
    </location>
</feature>
<feature type="transmembrane region" description="Helical" evidence="1">
    <location>
        <begin position="5"/>
        <end position="25"/>
    </location>
</feature>
<feature type="transmembrane region" description="Helical" evidence="1">
    <location>
        <begin position="30"/>
        <end position="50"/>
    </location>
</feature>
<feature type="transmembrane region" description="Helical" evidence="1">
    <location>
        <begin position="61"/>
        <end position="81"/>
    </location>
</feature>
<feature type="transmembrane region" description="Helical" evidence="1">
    <location>
        <begin position="92"/>
        <end position="112"/>
    </location>
</feature>
<feature type="transmembrane region" description="Helical" evidence="1">
    <location>
        <begin position="149"/>
        <end position="169"/>
    </location>
</feature>
<feature type="transmembrane region" description="Helical" evidence="1">
    <location>
        <begin position="177"/>
        <end position="197"/>
    </location>
</feature>
<feature type="transmembrane region" description="Helical" evidence="1">
    <location>
        <begin position="209"/>
        <end position="229"/>
    </location>
</feature>
<name>LRGB_BACC1</name>
<dbReference type="EMBL" id="AE017194">
    <property type="protein sequence ID" value="AAS44471.1"/>
    <property type="molecule type" value="Genomic_DNA"/>
</dbReference>
<dbReference type="KEGG" id="bca:BCE_5571"/>
<dbReference type="HOGENOM" id="CLU_082099_1_0_9"/>
<dbReference type="Proteomes" id="UP000002527">
    <property type="component" value="Chromosome"/>
</dbReference>
<dbReference type="GO" id="GO:0005886">
    <property type="term" value="C:plasma membrane"/>
    <property type="evidence" value="ECO:0007669"/>
    <property type="project" value="UniProtKB-SubCell"/>
</dbReference>
<dbReference type="GO" id="GO:0019835">
    <property type="term" value="P:cytolysis"/>
    <property type="evidence" value="ECO:0007669"/>
    <property type="project" value="UniProtKB-UniRule"/>
</dbReference>
<dbReference type="GO" id="GO:0031640">
    <property type="term" value="P:killing of cells of another organism"/>
    <property type="evidence" value="ECO:0007669"/>
    <property type="project" value="UniProtKB-KW"/>
</dbReference>
<dbReference type="GO" id="GO:0012501">
    <property type="term" value="P:programmed cell death"/>
    <property type="evidence" value="ECO:0007669"/>
    <property type="project" value="UniProtKB-UniRule"/>
</dbReference>
<dbReference type="HAMAP" id="MF_01142">
    <property type="entry name" value="LrgB"/>
    <property type="match status" value="1"/>
</dbReference>
<dbReference type="InterPro" id="IPR024891">
    <property type="entry name" value="Antiholin-like_LrgB"/>
</dbReference>
<dbReference type="InterPro" id="IPR007300">
    <property type="entry name" value="CidB/LrgB"/>
</dbReference>
<dbReference type="NCBIfam" id="NF003291">
    <property type="entry name" value="PRK04288.1"/>
    <property type="match status" value="1"/>
</dbReference>
<dbReference type="PANTHER" id="PTHR30249:SF0">
    <property type="entry name" value="PLASTIDAL GLYCOLATE_GLYCERATE TRANSLOCATOR 1, CHLOROPLASTIC"/>
    <property type="match status" value="1"/>
</dbReference>
<dbReference type="PANTHER" id="PTHR30249">
    <property type="entry name" value="PUTATIVE SEROTONIN TRANSPORTER"/>
    <property type="match status" value="1"/>
</dbReference>
<dbReference type="Pfam" id="PF04172">
    <property type="entry name" value="LrgB"/>
    <property type="match status" value="1"/>
</dbReference>